<dbReference type="EMBL" id="CP001956">
    <property type="protein sequence ID" value="ADE04113.1"/>
    <property type="molecule type" value="Genomic_DNA"/>
</dbReference>
<dbReference type="RefSeq" id="WP_004045271.1">
    <property type="nucleotide sequence ID" value="NC_013967.1"/>
</dbReference>
<dbReference type="SMR" id="D4GZA2"/>
<dbReference type="IntAct" id="D4GZA2">
    <property type="interactions" value="1"/>
</dbReference>
<dbReference type="STRING" id="309800.HVO_0158"/>
<dbReference type="PaxDb" id="309800-C498_19033"/>
<dbReference type="EnsemblBacteria" id="ADE04113">
    <property type="protein sequence ID" value="ADE04113"/>
    <property type="gene ID" value="HVO_0158"/>
</dbReference>
<dbReference type="GeneID" id="8924913"/>
<dbReference type="KEGG" id="hvo:HVO_0158"/>
<dbReference type="eggNOG" id="arCOG01764">
    <property type="taxonomic scope" value="Archaea"/>
</dbReference>
<dbReference type="HOGENOM" id="CLU_060161_4_3_2"/>
<dbReference type="OrthoDB" id="350539at2157"/>
<dbReference type="Proteomes" id="UP000008243">
    <property type="component" value="Chromosome"/>
</dbReference>
<dbReference type="GO" id="GO:0003677">
    <property type="term" value="F:DNA binding"/>
    <property type="evidence" value="ECO:0007669"/>
    <property type="project" value="UniProtKB-KW"/>
</dbReference>
<dbReference type="GO" id="GO:0003700">
    <property type="term" value="F:DNA-binding transcription factor activity"/>
    <property type="evidence" value="ECO:0007669"/>
    <property type="project" value="UniProtKB-UniRule"/>
</dbReference>
<dbReference type="GO" id="GO:0006352">
    <property type="term" value="P:DNA-templated transcription initiation"/>
    <property type="evidence" value="ECO:0007669"/>
    <property type="project" value="InterPro"/>
</dbReference>
<dbReference type="CDD" id="cd04518">
    <property type="entry name" value="TBP_archaea"/>
    <property type="match status" value="1"/>
</dbReference>
<dbReference type="FunFam" id="3.30.310.10:FF:000007">
    <property type="entry name" value="TATA-box-binding protein"/>
    <property type="match status" value="1"/>
</dbReference>
<dbReference type="FunFam" id="3.30.310.10:FF:000010">
    <property type="entry name" value="TATA-box-binding protein"/>
    <property type="match status" value="1"/>
</dbReference>
<dbReference type="Gene3D" id="3.30.310.10">
    <property type="entry name" value="TATA-Binding Protein"/>
    <property type="match status" value="2"/>
</dbReference>
<dbReference type="HAMAP" id="MF_00408">
    <property type="entry name" value="TATA_bind_prot_arch"/>
    <property type="match status" value="1"/>
</dbReference>
<dbReference type="InterPro" id="IPR000814">
    <property type="entry name" value="TBP"/>
</dbReference>
<dbReference type="InterPro" id="IPR033711">
    <property type="entry name" value="TBP_archaea"/>
</dbReference>
<dbReference type="InterPro" id="IPR030491">
    <property type="entry name" value="TBP_CS"/>
</dbReference>
<dbReference type="InterPro" id="IPR012295">
    <property type="entry name" value="TBP_dom_sf"/>
</dbReference>
<dbReference type="NCBIfam" id="NF001593">
    <property type="entry name" value="PRK00394.1-2"/>
    <property type="match status" value="1"/>
</dbReference>
<dbReference type="NCBIfam" id="NF001595">
    <property type="entry name" value="PRK00394.1-5"/>
    <property type="match status" value="1"/>
</dbReference>
<dbReference type="NCBIfam" id="NF001597">
    <property type="entry name" value="PRK00394.2-2"/>
    <property type="match status" value="1"/>
</dbReference>
<dbReference type="PANTHER" id="PTHR10126">
    <property type="entry name" value="TATA-BOX BINDING PROTEIN"/>
    <property type="match status" value="1"/>
</dbReference>
<dbReference type="Pfam" id="PF00352">
    <property type="entry name" value="TBP"/>
    <property type="match status" value="2"/>
</dbReference>
<dbReference type="PRINTS" id="PR00686">
    <property type="entry name" value="TIFACTORIID"/>
</dbReference>
<dbReference type="SUPFAM" id="SSF55945">
    <property type="entry name" value="TATA-box binding protein-like"/>
    <property type="match status" value="2"/>
</dbReference>
<dbReference type="PROSITE" id="PS00351">
    <property type="entry name" value="TFIID"/>
    <property type="match status" value="1"/>
</dbReference>
<feature type="chain" id="PRO_0000397110" description="TATA-box-binding protein 1">
    <location>
        <begin position="1"/>
        <end position="189"/>
    </location>
</feature>
<feature type="repeat" description="1">
    <location>
        <begin position="10"/>
        <end position="86"/>
    </location>
</feature>
<feature type="repeat" description="2">
    <location>
        <begin position="101"/>
        <end position="179"/>
    </location>
</feature>
<gene>
    <name type="primary">tbp1</name>
    <name type="ordered locus">HVO_0158</name>
</gene>
<sequence>MTDPKDTINIENVVASTGIGQELDLQSVAMDLEGADYDPEQFPGLVYRTQEPKSAALIFRSGKIVCTGAKSTDDVHESLEIVFDKLRELQIPVDDDPEITVQNIVTSADLGENLNLNAIAIGLGLENIEYEPEQFPGLVYRLDEPSVVALLFGSGKLVITGGKQPTDAEAAVDVIISRLSELGLLNGSF</sequence>
<organism>
    <name type="scientific">Haloferax volcanii (strain ATCC 29605 / DSM 3757 / JCM 8879 / NBRC 14742 / NCIMB 2012 / VKM B-1768 / DS2)</name>
    <name type="common">Halobacterium volcanii</name>
    <dbReference type="NCBI Taxonomy" id="309800"/>
    <lineage>
        <taxon>Archaea</taxon>
        <taxon>Methanobacteriati</taxon>
        <taxon>Methanobacteriota</taxon>
        <taxon>Stenosarchaea group</taxon>
        <taxon>Halobacteria</taxon>
        <taxon>Halobacteriales</taxon>
        <taxon>Haloferacaceae</taxon>
        <taxon>Haloferax</taxon>
    </lineage>
</organism>
<comment type="function">
    <text evidence="1">General factor that plays a role in the activation of archaeal genes transcribed by RNA polymerase. Binds specifically to the TATA box promoter element which lies close to the position of transcription initiation (By similarity).</text>
</comment>
<comment type="similarity">
    <text evidence="2">Belongs to the TBP family.</text>
</comment>
<evidence type="ECO:0000250" key="1"/>
<evidence type="ECO:0000305" key="2"/>
<protein>
    <recommendedName>
        <fullName>TATA-box-binding protein 1</fullName>
    </recommendedName>
    <alternativeName>
        <fullName>Box A-binding protein 1</fullName>
        <shortName>BAP 1</shortName>
    </alternativeName>
    <alternativeName>
        <fullName>TATA sequence-binding protein 1</fullName>
        <shortName>TBP 1</shortName>
    </alternativeName>
    <alternativeName>
        <fullName>TATA-box factor 1</fullName>
    </alternativeName>
</protein>
<reference key="1">
    <citation type="journal article" date="2010" name="PLoS ONE">
        <title>The complete genome sequence of Haloferax volcanii DS2, a model archaeon.</title>
        <authorList>
            <person name="Hartman A.L."/>
            <person name="Norais C."/>
            <person name="Badger J.H."/>
            <person name="Delmas S."/>
            <person name="Haldenby S."/>
            <person name="Madupu R."/>
            <person name="Robinson J."/>
            <person name="Khouri H."/>
            <person name="Ren Q."/>
            <person name="Lowe T.M."/>
            <person name="Maupin-Furlow J."/>
            <person name="Pohlschroder M."/>
            <person name="Daniels C."/>
            <person name="Pfeiffer F."/>
            <person name="Allers T."/>
            <person name="Eisen J.A."/>
        </authorList>
    </citation>
    <scope>NUCLEOTIDE SEQUENCE [LARGE SCALE GENOMIC DNA]</scope>
    <source>
        <strain>ATCC 29605 / DSM 3757 / JCM 8879 / NBRC 14742 / NCIMB 2012 / VKM B-1768 / DS2</strain>
    </source>
</reference>
<name>TBP1_HALVD</name>
<proteinExistence type="inferred from homology"/>
<accession>D4GZA2</accession>
<keyword id="KW-0238">DNA-binding</keyword>
<keyword id="KW-1185">Reference proteome</keyword>
<keyword id="KW-0677">Repeat</keyword>
<keyword id="KW-0804">Transcription</keyword>
<keyword id="KW-0805">Transcription regulation</keyword>